<dbReference type="EMBL" id="GU721052">
    <property type="protein sequence ID" value="ADE28869.1"/>
    <property type="molecule type" value="mRNA"/>
</dbReference>
<dbReference type="GO" id="GO:0005576">
    <property type="term" value="C:extracellular region"/>
    <property type="evidence" value="ECO:0007669"/>
    <property type="project" value="UniProtKB-SubCell"/>
</dbReference>
<dbReference type="GO" id="GO:0090729">
    <property type="term" value="F:toxin activity"/>
    <property type="evidence" value="ECO:0007669"/>
    <property type="project" value="UniProtKB-KW"/>
</dbReference>
<accession>D5KXH1</accession>
<organism>
    <name type="scientific">Gemmula speciosa</name>
    <name type="common">Splendid gem-turris</name>
    <name type="synonym">Pleurotoma speciosa</name>
    <dbReference type="NCBI Taxonomy" id="439592"/>
    <lineage>
        <taxon>Eukaryota</taxon>
        <taxon>Metazoa</taxon>
        <taxon>Spiralia</taxon>
        <taxon>Lophotrochozoa</taxon>
        <taxon>Mollusca</taxon>
        <taxon>Gastropoda</taxon>
        <taxon>Caenogastropoda</taxon>
        <taxon>Neogastropoda</taxon>
        <taxon>Conoidea</taxon>
        <taxon>Turridae</taxon>
        <taxon>Gemmula</taxon>
    </lineage>
</organism>
<feature type="signal peptide" evidence="2">
    <location>
        <begin position="1"/>
        <end position="21"/>
    </location>
</feature>
<feature type="propeptide" id="PRO_0000415074" evidence="1">
    <location>
        <begin position="22"/>
        <end position="30"/>
    </location>
</feature>
<feature type="peptide" id="PRO_0000415075" description="Turripeptide XIV-01">
    <location>
        <begin position="32"/>
        <end position="56"/>
    </location>
</feature>
<evidence type="ECO:0000250" key="1"/>
<evidence type="ECO:0000255" key="2"/>
<keyword id="KW-1015">Disulfide bond</keyword>
<keyword id="KW-0528">Neurotoxin</keyword>
<keyword id="KW-0964">Secreted</keyword>
<keyword id="KW-0732">Signal</keyword>
<keyword id="KW-0800">Toxin</keyword>
<protein>
    <recommendedName>
        <fullName>Turripeptide XIV-01</fullName>
    </recommendedName>
</protein>
<sequence length="56" mass="6076">MRFHVLLTVALLLTSLMSIEAKPVNGAEMERDSAIESCFVSCTYCAYNCGTPSSVD</sequence>
<comment type="subcellular location">
    <subcellularLocation>
        <location evidence="1">Secreted</location>
    </subcellularLocation>
</comment>
<comment type="tissue specificity">
    <text>Expressed by the venom duct.</text>
</comment>
<comment type="domain">
    <text>The cysteine framework is XIV (C-C-C-C).</text>
</comment>
<comment type="PTM">
    <text evidence="1">Contains 2 disulfide bonds.</text>
</comment>
<reference key="1">
    <citation type="submission" date="2010-02" db="EMBL/GenBank/DDBJ databases">
        <title>Cysteine-rich toxin gene families from Gemmula speciosa (Reeve, 1843).</title>
        <authorList>
            <person name="Uichanco J.A.V."/>
            <person name="Planta J.R.G."/>
            <person name="Santos A.D."/>
            <person name="Concepcion G.P."/>
        </authorList>
    </citation>
    <scope>NUCLEOTIDE SEQUENCE [MRNA]</scope>
    <source>
        <tissue>Venom duct</tissue>
    </source>
</reference>
<proteinExistence type="evidence at transcript level"/>
<name>TUE1_GEMSP</name>